<keyword id="KW-0325">Glycoprotein</keyword>
<keyword id="KW-0433">Leucine-rich repeat</keyword>
<keyword id="KW-0472">Membrane</keyword>
<keyword id="KW-1185">Reference proteome</keyword>
<keyword id="KW-0677">Repeat</keyword>
<keyword id="KW-0732">Signal</keyword>
<keyword id="KW-0812">Transmembrane</keyword>
<keyword id="KW-1133">Transmembrane helix</keyword>
<gene>
    <name type="primary">Lrtm1</name>
</gene>
<sequence length="356" mass="38542">MLNEGLCCGAWAMKGTLLLVSSVGLLLPGVGSCPMKCLCHPSSNSVDCSGQGLSKVPRDLPPWTVTLLLQDNRIHWLPALAFQSVSLLSTLNLSNNSLSNLAAEAFYGLPHLRVLNVTQNSLLSIESSFAHALPGLRELDLSSNSLRILPTSLGKPWENLTVFAVQQNHLLHLDRELLEAMPKVRLVLLKDNPWICDCHLLGLKLWLERFTFQGGETDGAICRLPEPWQGKALLSIPHELYQPCSLPSQDLAPSLVQQPGSAPQDAQKSHENSSGQQDPLECEAKPKPKPTNLRHAVATVVITGVVCGIVCLMMLAAAIYGCTYAAITAQYQGRPLASARKSEKMGSKELMDSSSA</sequence>
<name>LRTM1_MOUSE</name>
<evidence type="ECO:0000255" key="1"/>
<evidence type="ECO:0000256" key="2">
    <source>
        <dbReference type="SAM" id="MobiDB-lite"/>
    </source>
</evidence>
<evidence type="ECO:0000305" key="3"/>
<accession>Q8BXQ3</accession>
<protein>
    <recommendedName>
        <fullName>Leucine-rich repeat and transmembrane domain-containing protein 1</fullName>
    </recommendedName>
</protein>
<proteinExistence type="evidence at transcript level"/>
<comment type="subcellular location">
    <subcellularLocation>
        <location evidence="3">Membrane</location>
        <topology evidence="3">Single-pass type I membrane protein</topology>
    </subcellularLocation>
</comment>
<comment type="caution">
    <text evidence="3">It is uncertain whether Met-1 or Met-13 is the initiator.</text>
</comment>
<dbReference type="EMBL" id="AK044492">
    <property type="protein sequence ID" value="BAC31949.1"/>
    <property type="molecule type" value="mRNA"/>
</dbReference>
<dbReference type="EMBL" id="AK138618">
    <property type="protein sequence ID" value="BAE23722.1"/>
    <property type="molecule type" value="mRNA"/>
</dbReference>
<dbReference type="EMBL" id="BC099587">
    <property type="protein sequence ID" value="AAH99587.1"/>
    <property type="molecule type" value="mRNA"/>
</dbReference>
<dbReference type="EMBL" id="BC132594">
    <property type="protein sequence ID" value="AAI32595.1"/>
    <property type="molecule type" value="mRNA"/>
</dbReference>
<dbReference type="CCDS" id="CCDS26889.1"/>
<dbReference type="RefSeq" id="NP_795894.1">
    <property type="nucleotide sequence ID" value="NM_176920.4"/>
</dbReference>
<dbReference type="SMR" id="Q8BXQ3"/>
<dbReference type="FunCoup" id="Q8BXQ3">
    <property type="interactions" value="36"/>
</dbReference>
<dbReference type="STRING" id="10090.ENSMUSP00000061828"/>
<dbReference type="GlyCosmos" id="Q8BXQ3">
    <property type="glycosylation" value="3 sites, No reported glycans"/>
</dbReference>
<dbReference type="GlyGen" id="Q8BXQ3">
    <property type="glycosylation" value="3 sites"/>
</dbReference>
<dbReference type="PhosphoSitePlus" id="Q8BXQ3"/>
<dbReference type="PaxDb" id="10090-ENSMUSP00000061828"/>
<dbReference type="ProteomicsDB" id="292374"/>
<dbReference type="Antibodypedia" id="2503">
    <property type="antibodies" value="51 antibodies from 11 providers"/>
</dbReference>
<dbReference type="DNASU" id="319476"/>
<dbReference type="Ensembl" id="ENSMUST00000055662.4">
    <property type="protein sequence ID" value="ENSMUSP00000061828.3"/>
    <property type="gene ID" value="ENSMUSG00000045776.4"/>
</dbReference>
<dbReference type="GeneID" id="319476"/>
<dbReference type="KEGG" id="mmu:319476"/>
<dbReference type="UCSC" id="uc007suj.2">
    <property type="organism name" value="mouse"/>
</dbReference>
<dbReference type="AGR" id="MGI:2442106"/>
<dbReference type="CTD" id="57408"/>
<dbReference type="MGI" id="MGI:2442106">
    <property type="gene designation" value="Lrtm1"/>
</dbReference>
<dbReference type="VEuPathDB" id="HostDB:ENSMUSG00000045776"/>
<dbReference type="eggNOG" id="KOG0619">
    <property type="taxonomic scope" value="Eukaryota"/>
</dbReference>
<dbReference type="GeneTree" id="ENSGT00940000158933"/>
<dbReference type="HOGENOM" id="CLU_038584_0_0_1"/>
<dbReference type="InParanoid" id="Q8BXQ3"/>
<dbReference type="OMA" id="ITAKYHR"/>
<dbReference type="OrthoDB" id="80341at9989"/>
<dbReference type="PhylomeDB" id="Q8BXQ3"/>
<dbReference type="TreeFam" id="TF351114"/>
<dbReference type="BioGRID-ORCS" id="319476">
    <property type="hits" value="3 hits in 76 CRISPR screens"/>
</dbReference>
<dbReference type="PRO" id="PR:Q8BXQ3"/>
<dbReference type="Proteomes" id="UP000000589">
    <property type="component" value="Chromosome 14"/>
</dbReference>
<dbReference type="RNAct" id="Q8BXQ3">
    <property type="molecule type" value="protein"/>
</dbReference>
<dbReference type="Bgee" id="ENSMUSG00000045776">
    <property type="expression patterns" value="Expressed in interventricular septum and 38 other cell types or tissues"/>
</dbReference>
<dbReference type="ExpressionAtlas" id="Q8BXQ3">
    <property type="expression patterns" value="baseline and differential"/>
</dbReference>
<dbReference type="GO" id="GO:0016020">
    <property type="term" value="C:membrane"/>
    <property type="evidence" value="ECO:0007669"/>
    <property type="project" value="UniProtKB-SubCell"/>
</dbReference>
<dbReference type="GO" id="GO:0051965">
    <property type="term" value="P:positive regulation of synapse assembly"/>
    <property type="evidence" value="ECO:0000314"/>
    <property type="project" value="MGI"/>
</dbReference>
<dbReference type="FunFam" id="3.80.10.10:FF:000382">
    <property type="entry name" value="Leucine rich repeats and transmembrane domains 1"/>
    <property type="match status" value="1"/>
</dbReference>
<dbReference type="FunFam" id="3.80.10.10:FF:000503">
    <property type="entry name" value="Leucine rich repeats and transmembrane domains 1"/>
    <property type="match status" value="1"/>
</dbReference>
<dbReference type="Gene3D" id="3.80.10.10">
    <property type="entry name" value="Ribonuclease Inhibitor"/>
    <property type="match status" value="2"/>
</dbReference>
<dbReference type="InterPro" id="IPR000483">
    <property type="entry name" value="Cys-rich_flank_reg_C"/>
</dbReference>
<dbReference type="InterPro" id="IPR001611">
    <property type="entry name" value="Leu-rich_rpt"/>
</dbReference>
<dbReference type="InterPro" id="IPR003591">
    <property type="entry name" value="Leu-rich_rpt_typical-subtyp"/>
</dbReference>
<dbReference type="InterPro" id="IPR050467">
    <property type="entry name" value="LRFN"/>
</dbReference>
<dbReference type="InterPro" id="IPR032675">
    <property type="entry name" value="LRR_dom_sf"/>
</dbReference>
<dbReference type="InterPro" id="IPR000372">
    <property type="entry name" value="LRRNT"/>
</dbReference>
<dbReference type="PANTHER" id="PTHR45842:SF12">
    <property type="entry name" value="KEKKON 5, ISOFORM A"/>
    <property type="match status" value="1"/>
</dbReference>
<dbReference type="PANTHER" id="PTHR45842">
    <property type="entry name" value="SYNAPTIC ADHESION-LIKE MOLECULE SALM"/>
    <property type="match status" value="1"/>
</dbReference>
<dbReference type="Pfam" id="PF00560">
    <property type="entry name" value="LRR_1"/>
    <property type="match status" value="1"/>
</dbReference>
<dbReference type="Pfam" id="PF13855">
    <property type="entry name" value="LRR_8"/>
    <property type="match status" value="1"/>
</dbReference>
<dbReference type="PRINTS" id="PR00019">
    <property type="entry name" value="LEURICHRPT"/>
</dbReference>
<dbReference type="SMART" id="SM00369">
    <property type="entry name" value="LRR_TYP"/>
    <property type="match status" value="4"/>
</dbReference>
<dbReference type="SMART" id="SM00082">
    <property type="entry name" value="LRRCT"/>
    <property type="match status" value="1"/>
</dbReference>
<dbReference type="SMART" id="SM00013">
    <property type="entry name" value="LRRNT"/>
    <property type="match status" value="1"/>
</dbReference>
<dbReference type="SUPFAM" id="SSF52058">
    <property type="entry name" value="L domain-like"/>
    <property type="match status" value="1"/>
</dbReference>
<dbReference type="PROSITE" id="PS51450">
    <property type="entry name" value="LRR"/>
    <property type="match status" value="4"/>
</dbReference>
<reference key="1">
    <citation type="journal article" date="2005" name="Science">
        <title>The transcriptional landscape of the mammalian genome.</title>
        <authorList>
            <person name="Carninci P."/>
            <person name="Kasukawa T."/>
            <person name="Katayama S."/>
            <person name="Gough J."/>
            <person name="Frith M.C."/>
            <person name="Maeda N."/>
            <person name="Oyama R."/>
            <person name="Ravasi T."/>
            <person name="Lenhard B."/>
            <person name="Wells C."/>
            <person name="Kodzius R."/>
            <person name="Shimokawa K."/>
            <person name="Bajic V.B."/>
            <person name="Brenner S.E."/>
            <person name="Batalov S."/>
            <person name="Forrest A.R."/>
            <person name="Zavolan M."/>
            <person name="Davis M.J."/>
            <person name="Wilming L.G."/>
            <person name="Aidinis V."/>
            <person name="Allen J.E."/>
            <person name="Ambesi-Impiombato A."/>
            <person name="Apweiler R."/>
            <person name="Aturaliya R.N."/>
            <person name="Bailey T.L."/>
            <person name="Bansal M."/>
            <person name="Baxter L."/>
            <person name="Beisel K.W."/>
            <person name="Bersano T."/>
            <person name="Bono H."/>
            <person name="Chalk A.M."/>
            <person name="Chiu K.P."/>
            <person name="Choudhary V."/>
            <person name="Christoffels A."/>
            <person name="Clutterbuck D.R."/>
            <person name="Crowe M.L."/>
            <person name="Dalla E."/>
            <person name="Dalrymple B.P."/>
            <person name="de Bono B."/>
            <person name="Della Gatta G."/>
            <person name="di Bernardo D."/>
            <person name="Down T."/>
            <person name="Engstrom P."/>
            <person name="Fagiolini M."/>
            <person name="Faulkner G."/>
            <person name="Fletcher C.F."/>
            <person name="Fukushima T."/>
            <person name="Furuno M."/>
            <person name="Futaki S."/>
            <person name="Gariboldi M."/>
            <person name="Georgii-Hemming P."/>
            <person name="Gingeras T.R."/>
            <person name="Gojobori T."/>
            <person name="Green R.E."/>
            <person name="Gustincich S."/>
            <person name="Harbers M."/>
            <person name="Hayashi Y."/>
            <person name="Hensch T.K."/>
            <person name="Hirokawa N."/>
            <person name="Hill D."/>
            <person name="Huminiecki L."/>
            <person name="Iacono M."/>
            <person name="Ikeo K."/>
            <person name="Iwama A."/>
            <person name="Ishikawa T."/>
            <person name="Jakt M."/>
            <person name="Kanapin A."/>
            <person name="Katoh M."/>
            <person name="Kawasawa Y."/>
            <person name="Kelso J."/>
            <person name="Kitamura H."/>
            <person name="Kitano H."/>
            <person name="Kollias G."/>
            <person name="Krishnan S.P."/>
            <person name="Kruger A."/>
            <person name="Kummerfeld S.K."/>
            <person name="Kurochkin I.V."/>
            <person name="Lareau L.F."/>
            <person name="Lazarevic D."/>
            <person name="Lipovich L."/>
            <person name="Liu J."/>
            <person name="Liuni S."/>
            <person name="McWilliam S."/>
            <person name="Madan Babu M."/>
            <person name="Madera M."/>
            <person name="Marchionni L."/>
            <person name="Matsuda H."/>
            <person name="Matsuzawa S."/>
            <person name="Miki H."/>
            <person name="Mignone F."/>
            <person name="Miyake S."/>
            <person name="Morris K."/>
            <person name="Mottagui-Tabar S."/>
            <person name="Mulder N."/>
            <person name="Nakano N."/>
            <person name="Nakauchi H."/>
            <person name="Ng P."/>
            <person name="Nilsson R."/>
            <person name="Nishiguchi S."/>
            <person name="Nishikawa S."/>
            <person name="Nori F."/>
            <person name="Ohara O."/>
            <person name="Okazaki Y."/>
            <person name="Orlando V."/>
            <person name="Pang K.C."/>
            <person name="Pavan W.J."/>
            <person name="Pavesi G."/>
            <person name="Pesole G."/>
            <person name="Petrovsky N."/>
            <person name="Piazza S."/>
            <person name="Reed J."/>
            <person name="Reid J.F."/>
            <person name="Ring B.Z."/>
            <person name="Ringwald M."/>
            <person name="Rost B."/>
            <person name="Ruan Y."/>
            <person name="Salzberg S.L."/>
            <person name="Sandelin A."/>
            <person name="Schneider C."/>
            <person name="Schoenbach C."/>
            <person name="Sekiguchi K."/>
            <person name="Semple C.A."/>
            <person name="Seno S."/>
            <person name="Sessa L."/>
            <person name="Sheng Y."/>
            <person name="Shibata Y."/>
            <person name="Shimada H."/>
            <person name="Shimada K."/>
            <person name="Silva D."/>
            <person name="Sinclair B."/>
            <person name="Sperling S."/>
            <person name="Stupka E."/>
            <person name="Sugiura K."/>
            <person name="Sultana R."/>
            <person name="Takenaka Y."/>
            <person name="Taki K."/>
            <person name="Tammoja K."/>
            <person name="Tan S.L."/>
            <person name="Tang S."/>
            <person name="Taylor M.S."/>
            <person name="Tegner J."/>
            <person name="Teichmann S.A."/>
            <person name="Ueda H.R."/>
            <person name="van Nimwegen E."/>
            <person name="Verardo R."/>
            <person name="Wei C.L."/>
            <person name="Yagi K."/>
            <person name="Yamanishi H."/>
            <person name="Zabarovsky E."/>
            <person name="Zhu S."/>
            <person name="Zimmer A."/>
            <person name="Hide W."/>
            <person name="Bult C."/>
            <person name="Grimmond S.M."/>
            <person name="Teasdale R.D."/>
            <person name="Liu E.T."/>
            <person name="Brusic V."/>
            <person name="Quackenbush J."/>
            <person name="Wahlestedt C."/>
            <person name="Mattick J.S."/>
            <person name="Hume D.A."/>
            <person name="Kai C."/>
            <person name="Sasaki D."/>
            <person name="Tomaru Y."/>
            <person name="Fukuda S."/>
            <person name="Kanamori-Katayama M."/>
            <person name="Suzuki M."/>
            <person name="Aoki J."/>
            <person name="Arakawa T."/>
            <person name="Iida J."/>
            <person name="Imamura K."/>
            <person name="Itoh M."/>
            <person name="Kato T."/>
            <person name="Kawaji H."/>
            <person name="Kawagashira N."/>
            <person name="Kawashima T."/>
            <person name="Kojima M."/>
            <person name="Kondo S."/>
            <person name="Konno H."/>
            <person name="Nakano K."/>
            <person name="Ninomiya N."/>
            <person name="Nishio T."/>
            <person name="Okada M."/>
            <person name="Plessy C."/>
            <person name="Shibata K."/>
            <person name="Shiraki T."/>
            <person name="Suzuki S."/>
            <person name="Tagami M."/>
            <person name="Waki K."/>
            <person name="Watahiki A."/>
            <person name="Okamura-Oho Y."/>
            <person name="Suzuki H."/>
            <person name="Kawai J."/>
            <person name="Hayashizaki Y."/>
        </authorList>
    </citation>
    <scope>NUCLEOTIDE SEQUENCE [LARGE SCALE MRNA]</scope>
    <source>
        <strain>C57BL/6J</strain>
        <tissue>Retina</tissue>
        <tissue>Spinal cord</tissue>
    </source>
</reference>
<reference key="2">
    <citation type="journal article" date="2004" name="Genome Res.">
        <title>The status, quality, and expansion of the NIH full-length cDNA project: the Mammalian Gene Collection (MGC).</title>
        <authorList>
            <consortium name="The MGC Project Team"/>
        </authorList>
    </citation>
    <scope>NUCLEOTIDE SEQUENCE [LARGE SCALE MRNA]</scope>
</reference>
<feature type="signal peptide" evidence="1">
    <location>
        <begin position="1"/>
        <end position="32"/>
    </location>
</feature>
<feature type="chain" id="PRO_0000279757" description="Leucine-rich repeat and transmembrane domain-containing protein 1">
    <location>
        <begin position="33"/>
        <end position="356"/>
    </location>
</feature>
<feature type="topological domain" description="Extracellular" evidence="1">
    <location>
        <begin position="33"/>
        <end position="299"/>
    </location>
</feature>
<feature type="transmembrane region" description="Helical" evidence="1">
    <location>
        <begin position="300"/>
        <end position="320"/>
    </location>
</feature>
<feature type="topological domain" description="Cytoplasmic" evidence="1">
    <location>
        <begin position="321"/>
        <end position="356"/>
    </location>
</feature>
<feature type="domain" description="LRRNT">
    <location>
        <begin position="33"/>
        <end position="62"/>
    </location>
</feature>
<feature type="repeat" description="LRR 1">
    <location>
        <begin position="63"/>
        <end position="84"/>
    </location>
</feature>
<feature type="repeat" description="LRR 2">
    <location>
        <begin position="87"/>
        <end position="108"/>
    </location>
</feature>
<feature type="repeat" description="LRR 3">
    <location>
        <begin position="111"/>
        <end position="132"/>
    </location>
</feature>
<feature type="repeat" description="LRR 4">
    <location>
        <begin position="135"/>
        <end position="156"/>
    </location>
</feature>
<feature type="repeat" description="LRR 5">
    <location>
        <begin position="159"/>
        <end position="180"/>
    </location>
</feature>
<feature type="domain" description="LRRCT">
    <location>
        <begin position="192"/>
        <end position="246"/>
    </location>
</feature>
<feature type="region of interest" description="Disordered" evidence="2">
    <location>
        <begin position="255"/>
        <end position="288"/>
    </location>
</feature>
<feature type="compositionally biased region" description="Polar residues" evidence="2">
    <location>
        <begin position="255"/>
        <end position="277"/>
    </location>
</feature>
<feature type="glycosylation site" description="N-linked (GlcNAc...) asparagine" evidence="1">
    <location>
        <position position="92"/>
    </location>
</feature>
<feature type="glycosylation site" description="N-linked (GlcNAc...) asparagine" evidence="1">
    <location>
        <position position="116"/>
    </location>
</feature>
<feature type="glycosylation site" description="N-linked (GlcNAc...) asparagine" evidence="1">
    <location>
        <position position="159"/>
    </location>
</feature>
<organism>
    <name type="scientific">Mus musculus</name>
    <name type="common">Mouse</name>
    <dbReference type="NCBI Taxonomy" id="10090"/>
    <lineage>
        <taxon>Eukaryota</taxon>
        <taxon>Metazoa</taxon>
        <taxon>Chordata</taxon>
        <taxon>Craniata</taxon>
        <taxon>Vertebrata</taxon>
        <taxon>Euteleostomi</taxon>
        <taxon>Mammalia</taxon>
        <taxon>Eutheria</taxon>
        <taxon>Euarchontoglires</taxon>
        <taxon>Glires</taxon>
        <taxon>Rodentia</taxon>
        <taxon>Myomorpha</taxon>
        <taxon>Muroidea</taxon>
        <taxon>Muridae</taxon>
        <taxon>Murinae</taxon>
        <taxon>Mus</taxon>
        <taxon>Mus</taxon>
    </lineage>
</organism>